<dbReference type="EC" id="3.1.3.-" evidence="2"/>
<dbReference type="EC" id="3.1.3.16"/>
<dbReference type="EC" id="3.1.3.48" evidence="1"/>
<dbReference type="EMBL" id="AY560906">
    <property type="protein sequence ID" value="ABE98181.1"/>
    <property type="molecule type" value="Genomic_DNA"/>
</dbReference>
<dbReference type="SMR" id="Q1M199"/>
<dbReference type="FunCoup" id="Q1M199">
    <property type="interactions" value="3"/>
</dbReference>
<dbReference type="STRING" id="9615.ENSCAFP00000030595"/>
<dbReference type="CAZy" id="CBM20">
    <property type="family name" value="Carbohydrate-Binding Module Family 20"/>
</dbReference>
<dbReference type="PaxDb" id="9612-ENSCAFP00000030595"/>
<dbReference type="Ensembl" id="ENSCAFT00030033597.1">
    <property type="protein sequence ID" value="ENSCAFP00030029318.1"/>
    <property type="gene ID" value="ENSCAFG00030018154.1"/>
</dbReference>
<dbReference type="eggNOG" id="KOG1716">
    <property type="taxonomic scope" value="Eukaryota"/>
</dbReference>
<dbReference type="InParanoid" id="Q1M199"/>
<dbReference type="OrthoDB" id="273181at2759"/>
<dbReference type="Proteomes" id="UP000002254">
    <property type="component" value="Unplaced"/>
</dbReference>
<dbReference type="Proteomes" id="UP000694429">
    <property type="component" value="Chromosome 1"/>
</dbReference>
<dbReference type="Proteomes" id="UP000694542">
    <property type="component" value="Unplaced"/>
</dbReference>
<dbReference type="Proteomes" id="UP000805418">
    <property type="component" value="Unplaced"/>
</dbReference>
<dbReference type="GO" id="GO:0005737">
    <property type="term" value="C:cytoplasm"/>
    <property type="evidence" value="ECO:0000250"/>
    <property type="project" value="UniProtKB"/>
</dbReference>
<dbReference type="GO" id="GO:0098556">
    <property type="term" value="C:cytoplasmic side of rough endoplasmic reticulum membrane"/>
    <property type="evidence" value="ECO:0000250"/>
    <property type="project" value="UniProtKB"/>
</dbReference>
<dbReference type="GO" id="GO:0005634">
    <property type="term" value="C:nucleus"/>
    <property type="evidence" value="ECO:0000318"/>
    <property type="project" value="GO_Central"/>
</dbReference>
<dbReference type="GO" id="GO:0005886">
    <property type="term" value="C:plasma membrane"/>
    <property type="evidence" value="ECO:0007669"/>
    <property type="project" value="UniProtKB-SubCell"/>
</dbReference>
<dbReference type="GO" id="GO:0030246">
    <property type="term" value="F:carbohydrate binding"/>
    <property type="evidence" value="ECO:0000250"/>
    <property type="project" value="UniProtKB"/>
</dbReference>
<dbReference type="GO" id="GO:0019203">
    <property type="term" value="F:carbohydrate phosphatase activity"/>
    <property type="evidence" value="ECO:0000250"/>
    <property type="project" value="UniProtKB"/>
</dbReference>
<dbReference type="GO" id="GO:2001069">
    <property type="term" value="F:glycogen binding"/>
    <property type="evidence" value="ECO:0000250"/>
    <property type="project" value="UniProtKB"/>
</dbReference>
<dbReference type="GO" id="GO:0004722">
    <property type="term" value="F:protein serine/threonine phosphatase activity"/>
    <property type="evidence" value="ECO:0007669"/>
    <property type="project" value="UniProtKB-EC"/>
</dbReference>
<dbReference type="GO" id="GO:0004725">
    <property type="term" value="F:protein tyrosine phosphatase activity"/>
    <property type="evidence" value="ECO:0000318"/>
    <property type="project" value="GO_Central"/>
</dbReference>
<dbReference type="GO" id="GO:2001070">
    <property type="term" value="F:starch binding"/>
    <property type="evidence" value="ECO:0007669"/>
    <property type="project" value="InterPro"/>
</dbReference>
<dbReference type="GO" id="GO:0006914">
    <property type="term" value="P:autophagy"/>
    <property type="evidence" value="ECO:0007669"/>
    <property type="project" value="UniProtKB-KW"/>
</dbReference>
<dbReference type="GO" id="GO:0016311">
    <property type="term" value="P:dephosphorylation"/>
    <property type="evidence" value="ECO:0000250"/>
    <property type="project" value="UniProtKB"/>
</dbReference>
<dbReference type="GO" id="GO:0005977">
    <property type="term" value="P:glycogen metabolic process"/>
    <property type="evidence" value="ECO:0000250"/>
    <property type="project" value="UniProtKB"/>
</dbReference>
<dbReference type="CDD" id="cd05806">
    <property type="entry name" value="CBM20_laforin"/>
    <property type="match status" value="1"/>
</dbReference>
<dbReference type="CDD" id="cd14526">
    <property type="entry name" value="DSP_laforin-like"/>
    <property type="match status" value="1"/>
</dbReference>
<dbReference type="FunFam" id="2.60.40.10:FF:001039">
    <property type="entry name" value="laforin isoform X1"/>
    <property type="match status" value="1"/>
</dbReference>
<dbReference type="FunFam" id="3.90.190.10:FF:000054">
    <property type="entry name" value="laforin isoform X1"/>
    <property type="match status" value="1"/>
</dbReference>
<dbReference type="Gene3D" id="2.60.40.10">
    <property type="entry name" value="Immunoglobulins"/>
    <property type="match status" value="1"/>
</dbReference>
<dbReference type="Gene3D" id="3.90.190.10">
    <property type="entry name" value="Protein tyrosine phosphatase superfamily"/>
    <property type="match status" value="1"/>
</dbReference>
<dbReference type="InterPro" id="IPR013784">
    <property type="entry name" value="Carb-bd-like_fold"/>
</dbReference>
<dbReference type="InterPro" id="IPR002044">
    <property type="entry name" value="CBM20"/>
</dbReference>
<dbReference type="InterPro" id="IPR034831">
    <property type="entry name" value="CBM20_laforin"/>
</dbReference>
<dbReference type="InterPro" id="IPR045204">
    <property type="entry name" value="DSP_laforin-like"/>
</dbReference>
<dbReference type="InterPro" id="IPR000340">
    <property type="entry name" value="Dual-sp_phosphatase_cat-dom"/>
</dbReference>
<dbReference type="InterPro" id="IPR013783">
    <property type="entry name" value="Ig-like_fold"/>
</dbReference>
<dbReference type="InterPro" id="IPR042942">
    <property type="entry name" value="Laforin"/>
</dbReference>
<dbReference type="InterPro" id="IPR029021">
    <property type="entry name" value="Prot-tyrosine_phosphatase-like"/>
</dbReference>
<dbReference type="InterPro" id="IPR016130">
    <property type="entry name" value="Tyr_Pase_AS"/>
</dbReference>
<dbReference type="InterPro" id="IPR000387">
    <property type="entry name" value="Tyr_Pase_dom"/>
</dbReference>
<dbReference type="InterPro" id="IPR020422">
    <property type="entry name" value="TYR_PHOSPHATASE_DUAL_dom"/>
</dbReference>
<dbReference type="PANTHER" id="PTHR46864">
    <property type="entry name" value="LAFORIN"/>
    <property type="match status" value="1"/>
</dbReference>
<dbReference type="PANTHER" id="PTHR46864:SF1">
    <property type="entry name" value="LAFORIN"/>
    <property type="match status" value="1"/>
</dbReference>
<dbReference type="Pfam" id="PF00686">
    <property type="entry name" value="CBM_20"/>
    <property type="match status" value="1"/>
</dbReference>
<dbReference type="Pfam" id="PF00782">
    <property type="entry name" value="DSPc"/>
    <property type="match status" value="1"/>
</dbReference>
<dbReference type="SMART" id="SM01065">
    <property type="entry name" value="CBM_2"/>
    <property type="match status" value="1"/>
</dbReference>
<dbReference type="SMART" id="SM00195">
    <property type="entry name" value="DSPc"/>
    <property type="match status" value="1"/>
</dbReference>
<dbReference type="SUPFAM" id="SSF52799">
    <property type="entry name" value="(Phosphotyrosine protein) phosphatases II"/>
    <property type="match status" value="1"/>
</dbReference>
<dbReference type="SUPFAM" id="SSF49452">
    <property type="entry name" value="Starch-binding domain-like"/>
    <property type="match status" value="1"/>
</dbReference>
<dbReference type="PROSITE" id="PS51166">
    <property type="entry name" value="CBM20"/>
    <property type="match status" value="1"/>
</dbReference>
<dbReference type="PROSITE" id="PS00383">
    <property type="entry name" value="TYR_PHOSPHATASE_1"/>
    <property type="match status" value="1"/>
</dbReference>
<dbReference type="PROSITE" id="PS50056">
    <property type="entry name" value="TYR_PHOSPHATASE_2"/>
    <property type="match status" value="1"/>
</dbReference>
<dbReference type="PROSITE" id="PS50054">
    <property type="entry name" value="TYR_PHOSPHATASE_DUAL"/>
    <property type="match status" value="1"/>
</dbReference>
<feature type="chain" id="PRO_0000289592" description="Laforin">
    <location>
        <begin position="1"/>
        <end position="331"/>
    </location>
</feature>
<feature type="domain" description="CBM20" evidence="4">
    <location>
        <begin position="1"/>
        <end position="124"/>
    </location>
</feature>
<feature type="domain" description="Tyrosine-protein phosphatase" evidence="3">
    <location>
        <begin position="156"/>
        <end position="323"/>
    </location>
</feature>
<feature type="short sequence motif" description="Glucan phosphatase signature motif CXAGXGR" evidence="1">
    <location>
        <begin position="266"/>
        <end position="272"/>
    </location>
</feature>
<feature type="active site" description="Phosphocysteine intermediate" evidence="3">
    <location>
        <position position="266"/>
    </location>
</feature>
<feature type="binding site" evidence="1">
    <location>
        <position position="32"/>
    </location>
    <ligand>
        <name>substrate</name>
    </ligand>
</feature>
<feature type="binding site" evidence="1">
    <location>
        <position position="87"/>
    </location>
    <ligand>
        <name>substrate</name>
    </ligand>
</feature>
<feature type="binding site" evidence="1">
    <location>
        <begin position="103"/>
        <end position="107"/>
    </location>
    <ligand>
        <name>substrate</name>
    </ligand>
</feature>
<feature type="binding site" evidence="1">
    <location>
        <position position="197"/>
    </location>
    <ligand>
        <name>substrate</name>
    </ligand>
</feature>
<feature type="binding site" evidence="1">
    <location>
        <position position="235"/>
    </location>
    <ligand>
        <name>substrate</name>
    </ligand>
</feature>
<feature type="binding site" evidence="1">
    <location>
        <position position="241"/>
    </location>
    <ligand>
        <name>substrate</name>
    </ligand>
</feature>
<feature type="binding site" evidence="1">
    <location>
        <begin position="267"/>
        <end position="272"/>
    </location>
    <ligand>
        <name>substrate</name>
    </ligand>
</feature>
<feature type="binding site" evidence="1">
    <location>
        <position position="304"/>
    </location>
    <ligand>
        <name>substrate</name>
    </ligand>
</feature>
<feature type="site" description="Required for homodimerization" evidence="1">
    <location>
        <position position="329"/>
    </location>
</feature>
<feature type="modified residue" description="Phosphoserine; by AMPK" evidence="1">
    <location>
        <position position="25"/>
    </location>
</feature>
<proteinExistence type="inferred from homology"/>
<gene>
    <name type="primary">EPM2A</name>
</gene>
<organism>
    <name type="scientific">Canis lupus familiaris</name>
    <name type="common">Dog</name>
    <name type="synonym">Canis familiaris</name>
    <dbReference type="NCBI Taxonomy" id="9615"/>
    <lineage>
        <taxon>Eukaryota</taxon>
        <taxon>Metazoa</taxon>
        <taxon>Chordata</taxon>
        <taxon>Craniata</taxon>
        <taxon>Vertebrata</taxon>
        <taxon>Euteleostomi</taxon>
        <taxon>Mammalia</taxon>
        <taxon>Eutheria</taxon>
        <taxon>Laurasiatheria</taxon>
        <taxon>Carnivora</taxon>
        <taxon>Caniformia</taxon>
        <taxon>Canidae</taxon>
        <taxon>Canis</taxon>
    </lineage>
</organism>
<name>EPM2A_CANLF</name>
<keyword id="KW-0072">Autophagy</keyword>
<keyword id="KW-0119">Carbohydrate metabolism</keyword>
<keyword id="KW-1003">Cell membrane</keyword>
<keyword id="KW-0963">Cytoplasm</keyword>
<keyword id="KW-0256">Endoplasmic reticulum</keyword>
<keyword id="KW-0321">Glycogen metabolism</keyword>
<keyword id="KW-0378">Hydrolase</keyword>
<keyword id="KW-0472">Membrane</keyword>
<keyword id="KW-0597">Phosphoprotein</keyword>
<keyword id="KW-0904">Protein phosphatase</keyword>
<keyword id="KW-1185">Reference proteome</keyword>
<keyword id="KW-0832">Ubl conjugation</keyword>
<comment type="function">
    <text evidence="1 2">Plays an important role in preventing glycogen hyperphosphorylation and the formation of insoluble aggregates, via its activity as glycogen phosphatase, and by promoting the ubiquitination of proteins involved in glycogen metabolism via its interaction with the E3 ubiquitin ligase NHLRC1/malin. Dephosphorylates phosphotyrosine and synthetic substrates, such as para-nitrophenylphosphate (pNPP), and has low activity with phosphoserine and phosphothreonine substrates (in vitro). Has also been shown to dephosphorylate MAPT. Shows strong phosphatase activity towards complex carbohydrates in vitro, avoiding glycogen hyperphosphorylation which is associated with reduced branching and formation of insoluble aggregates. Forms a complex with NHLRC1/malin and HSP70, which suppresses the cellular toxicity of misfolded proteins by promoting their degradation through the ubiquitin-proteasome system (UPS). Acts as a scaffold protein to facilitate PPP1R3C/PTG ubiquitination by NHLRC1/malin. Also promotes proteasome-independent protein degradation through the macroautophagy pathway.</text>
</comment>
<comment type="catalytic activity">
    <reaction evidence="5">
        <text>O-phospho-L-tyrosyl-[protein] + H2O = L-tyrosyl-[protein] + phosphate</text>
        <dbReference type="Rhea" id="RHEA:10684"/>
        <dbReference type="Rhea" id="RHEA-COMP:10136"/>
        <dbReference type="Rhea" id="RHEA-COMP:20101"/>
        <dbReference type="ChEBI" id="CHEBI:15377"/>
        <dbReference type="ChEBI" id="CHEBI:43474"/>
        <dbReference type="ChEBI" id="CHEBI:46858"/>
        <dbReference type="ChEBI" id="CHEBI:61978"/>
        <dbReference type="EC" id="3.1.3.48"/>
    </reaction>
</comment>
<comment type="catalytic activity">
    <reaction>
        <text>O-phospho-L-seryl-[protein] + H2O = L-seryl-[protein] + phosphate</text>
        <dbReference type="Rhea" id="RHEA:20629"/>
        <dbReference type="Rhea" id="RHEA-COMP:9863"/>
        <dbReference type="Rhea" id="RHEA-COMP:11604"/>
        <dbReference type="ChEBI" id="CHEBI:15377"/>
        <dbReference type="ChEBI" id="CHEBI:29999"/>
        <dbReference type="ChEBI" id="CHEBI:43474"/>
        <dbReference type="ChEBI" id="CHEBI:83421"/>
        <dbReference type="EC" id="3.1.3.16"/>
    </reaction>
</comment>
<comment type="catalytic activity">
    <reaction>
        <text>O-phospho-L-threonyl-[protein] + H2O = L-threonyl-[protein] + phosphate</text>
        <dbReference type="Rhea" id="RHEA:47004"/>
        <dbReference type="Rhea" id="RHEA-COMP:11060"/>
        <dbReference type="Rhea" id="RHEA-COMP:11605"/>
        <dbReference type="ChEBI" id="CHEBI:15377"/>
        <dbReference type="ChEBI" id="CHEBI:30013"/>
        <dbReference type="ChEBI" id="CHEBI:43474"/>
        <dbReference type="ChEBI" id="CHEBI:61977"/>
        <dbReference type="EC" id="3.1.3.16"/>
    </reaction>
</comment>
<comment type="subunit">
    <text evidence="1">Homodimer. Interacts with itself. Interacts with PPP1R3B, PPP1R3C, PPP1R3D, HIRIP5, and EPM2AIP1. Binds glycogen and Lafora bodies. Interacts with NHLRC1/malin (via the NHL repeats). Forms a complex with NHLRC1/malin and HSP70. Interacts with PPP1R3D; in the presence of NHLC1/malin the interaction leads to ubiquitination and autophagic degradation of PPP1R3D. Interacts (via the phosphatase domain) with MAPT/Tau; the interaction dephosphorylates MAPT. Interacts with PRDM8.</text>
</comment>
<comment type="subcellular location">
    <subcellularLocation>
        <location evidence="1">Cytoplasm</location>
    </subcellularLocation>
    <subcellularLocation>
        <location evidence="1">Endoplasmic reticulum membrane</location>
        <topology evidence="1">Peripheral membrane protein</topology>
        <orientation evidence="1">Cytoplasmic side</orientation>
    </subcellularLocation>
    <subcellularLocation>
        <location evidence="1">Cell membrane</location>
    </subcellularLocation>
    <text evidence="1">Colocalizes with glycogen synthase in punctate structures in the cytoplasm. Primarily associated with polyribosomes at the rough endoplasmic reticulum, and also detected at the plasma membrane. Under glycogenolytic conditions localizes to the nucleus.</text>
</comment>
<comment type="domain">
    <text evidence="1">The CBM20 domain mediates binding to cytoplasmic glycogen and to Lafora polyglucosan bodies.</text>
</comment>
<comment type="PTM">
    <text evidence="1">Polyubiquitinated by NHLRC1/malin.</text>
</comment>
<comment type="PTM">
    <text evidence="1">Phosphorylation on Ser-25 by AMPK affects the phosphatase activity of the enzyme and its ability to homodimerize and interact with NHLRC1, PPP1R3C or PRKAA2.</text>
</comment>
<comment type="similarity">
    <text evidence="6">Belongs to the protein-tyrosine phosphatase family.</text>
</comment>
<accession>Q1M199</accession>
<protein>
    <recommendedName>
        <fullName>Laforin</fullName>
        <ecNumber evidence="2">3.1.3.-</ecNumber>
        <ecNumber>3.1.3.16</ecNumber>
        <ecNumber evidence="1">3.1.3.48</ecNumber>
    </recommendedName>
    <alternativeName>
        <fullName>Glucan phosphatase</fullName>
    </alternativeName>
    <alternativeName>
        <fullName>Lafora PTPase</fullName>
        <shortName>LAFPTPase</shortName>
    </alternativeName>
</protein>
<evidence type="ECO:0000250" key="1">
    <source>
        <dbReference type="UniProtKB" id="O95278"/>
    </source>
</evidence>
<evidence type="ECO:0000250" key="2">
    <source>
        <dbReference type="UniProtKB" id="Q9WUA5"/>
    </source>
</evidence>
<evidence type="ECO:0000255" key="3">
    <source>
        <dbReference type="PROSITE-ProRule" id="PRU00160"/>
    </source>
</evidence>
<evidence type="ECO:0000255" key="4">
    <source>
        <dbReference type="PROSITE-ProRule" id="PRU00594"/>
    </source>
</evidence>
<evidence type="ECO:0000255" key="5">
    <source>
        <dbReference type="PROSITE-ProRule" id="PRU10044"/>
    </source>
</evidence>
<evidence type="ECO:0000305" key="6"/>
<reference key="1">
    <citation type="journal article" date="2005" name="Science">
        <title>Expanded repeat in canine epilepsy.</title>
        <authorList>
            <person name="Lohi H."/>
            <person name="Young E.J."/>
            <person name="Fitzmaurice S.N."/>
            <person name="Rusbridge C."/>
            <person name="Chan E.M."/>
            <person name="Vervoort M."/>
            <person name="Turnbull J."/>
            <person name="Zhao X.C."/>
            <person name="Ianzano L."/>
            <person name="Paterson A.D."/>
            <person name="Sutter N.B."/>
            <person name="Ostrander E.A."/>
            <person name="Andre C."/>
            <person name="Shelton G.D."/>
            <person name="Ackerley C.A."/>
            <person name="Scherer S.W."/>
            <person name="Minassian B.A."/>
        </authorList>
    </citation>
    <scope>NUCLEOTIDE SEQUENCE [GENOMIC DNA]</scope>
</reference>
<sequence>MRFRFGVVVPPAGAGAAPELLVVGSRPELGRWEPRGAVRLRPAGSAAGGGARALQEPGLWLGEVELAPGEAARDGAEPARVDTFWYKFLKREPGGALSWEGNGPHHDRCCTYNENNLVDGVYCLPIGHWIEATGHTNEMKHTTDFYFNIAGHQAMHYSRILPNIWLGSCPRQVEHITIKLKHELGITAVMNFQTEWDIVQNSSGCNRYPEPMTPDTMIKLYKEEGLVYIWMPTPDMSTEGRVQMLPQAVCLLHALLENGHTVYVHCNAGVGRSTAAVCGWLQYVMGWNLRKVQYFLMAKRPAVYIDEDALARAEEDFFQKFGKVRSSVCSV</sequence>